<sequence>MEDSPTMVKVDRGENQILSCRGRRCGFKVLGYVTGDMKEFANWLKDKPVVLQFMDWILRGISQVVFVSNPISGILILVGLLVQNPWWALCGCVGTVVSTLTALLLSQDRSAIAAGLQGYNATLVGILMAVFSNKGDYFWWLIFPVSAMSMTCPVFSSALSSVLSKWDLPVFTLPFNMALSMYLSATGHYNTFFPSKLFTPVSSVPNITWSELSALELLKSLPVGVGQIYGCDNPWTGGIFLCAILLSSPLMCLHAAIGSLLGVIAGLSLAAPFEDIYFGLWGFNSSLACIAIGGMFMALTWQTHLLALACALFTAYFGACMAHLMAVVHLPACTWSFCLATLLFLLLTTKNPNIYRMPLSKVTYSEENRIFYLQNKKRMVESPL</sequence>
<reference key="1">
    <citation type="journal article" date="2002" name="J. Biol. Chem.">
        <title>Urea-selective concentrating defect in transgenic mice lacking urea transporter UT-B.</title>
        <authorList>
            <person name="Yang B."/>
            <person name="Bankir L."/>
            <person name="Gillespie A."/>
            <person name="Epstein C.J."/>
            <person name="Verkman A.S."/>
        </authorList>
    </citation>
    <scope>NUCLEOTIDE SEQUENCE [MRNA] (ISOFORM 1)</scope>
    <scope>FUNCTION</scope>
    <scope>TRANSPORTER ACTIVITY</scope>
    <scope>TISSUE SPECIFICITY</scope>
    <scope>DISRUPTION PHENOTYPE</scope>
    <source>
        <strain>C57BL/6J</strain>
        <tissue>Kidney</tissue>
    </source>
</reference>
<reference key="2">
    <citation type="journal article" date="2005" name="Am. J. Physiol.">
        <title>UT-B1 urea transporter is expressed along the urinary and gastrointestinal tracts of the mouse.</title>
        <authorList>
            <person name="Lucien N."/>
            <person name="Bruneval P."/>
            <person name="Lasbennes F."/>
            <person name="Belair M.F."/>
            <person name="Mandet C."/>
            <person name="Cartron J.P."/>
            <person name="Bailly P."/>
            <person name="Trinh-Trang-Tan M.M."/>
        </authorList>
    </citation>
    <scope>NUCLEOTIDE SEQUENCE [MRNA] (ISOFORM 1)</scope>
    <scope>SUBCELLULAR LOCATION</scope>
    <scope>TISSUE SPECIFICITY</scope>
    <scope>GLYCOSYLATION</scope>
    <scope>INDUCTION</scope>
    <source>
        <strain>BALB/cJ</strain>
        <tissue>Kidney</tissue>
    </source>
</reference>
<reference key="3">
    <citation type="journal article" date="2005" name="Science">
        <title>The transcriptional landscape of the mammalian genome.</title>
        <authorList>
            <person name="Carninci P."/>
            <person name="Kasukawa T."/>
            <person name="Katayama S."/>
            <person name="Gough J."/>
            <person name="Frith M.C."/>
            <person name="Maeda N."/>
            <person name="Oyama R."/>
            <person name="Ravasi T."/>
            <person name="Lenhard B."/>
            <person name="Wells C."/>
            <person name="Kodzius R."/>
            <person name="Shimokawa K."/>
            <person name="Bajic V.B."/>
            <person name="Brenner S.E."/>
            <person name="Batalov S."/>
            <person name="Forrest A.R."/>
            <person name="Zavolan M."/>
            <person name="Davis M.J."/>
            <person name="Wilming L.G."/>
            <person name="Aidinis V."/>
            <person name="Allen J.E."/>
            <person name="Ambesi-Impiombato A."/>
            <person name="Apweiler R."/>
            <person name="Aturaliya R.N."/>
            <person name="Bailey T.L."/>
            <person name="Bansal M."/>
            <person name="Baxter L."/>
            <person name="Beisel K.W."/>
            <person name="Bersano T."/>
            <person name="Bono H."/>
            <person name="Chalk A.M."/>
            <person name="Chiu K.P."/>
            <person name="Choudhary V."/>
            <person name="Christoffels A."/>
            <person name="Clutterbuck D.R."/>
            <person name="Crowe M.L."/>
            <person name="Dalla E."/>
            <person name="Dalrymple B.P."/>
            <person name="de Bono B."/>
            <person name="Della Gatta G."/>
            <person name="di Bernardo D."/>
            <person name="Down T."/>
            <person name="Engstrom P."/>
            <person name="Fagiolini M."/>
            <person name="Faulkner G."/>
            <person name="Fletcher C.F."/>
            <person name="Fukushima T."/>
            <person name="Furuno M."/>
            <person name="Futaki S."/>
            <person name="Gariboldi M."/>
            <person name="Georgii-Hemming P."/>
            <person name="Gingeras T.R."/>
            <person name="Gojobori T."/>
            <person name="Green R.E."/>
            <person name="Gustincich S."/>
            <person name="Harbers M."/>
            <person name="Hayashi Y."/>
            <person name="Hensch T.K."/>
            <person name="Hirokawa N."/>
            <person name="Hill D."/>
            <person name="Huminiecki L."/>
            <person name="Iacono M."/>
            <person name="Ikeo K."/>
            <person name="Iwama A."/>
            <person name="Ishikawa T."/>
            <person name="Jakt M."/>
            <person name="Kanapin A."/>
            <person name="Katoh M."/>
            <person name="Kawasawa Y."/>
            <person name="Kelso J."/>
            <person name="Kitamura H."/>
            <person name="Kitano H."/>
            <person name="Kollias G."/>
            <person name="Krishnan S.P."/>
            <person name="Kruger A."/>
            <person name="Kummerfeld S.K."/>
            <person name="Kurochkin I.V."/>
            <person name="Lareau L.F."/>
            <person name="Lazarevic D."/>
            <person name="Lipovich L."/>
            <person name="Liu J."/>
            <person name="Liuni S."/>
            <person name="McWilliam S."/>
            <person name="Madan Babu M."/>
            <person name="Madera M."/>
            <person name="Marchionni L."/>
            <person name="Matsuda H."/>
            <person name="Matsuzawa S."/>
            <person name="Miki H."/>
            <person name="Mignone F."/>
            <person name="Miyake S."/>
            <person name="Morris K."/>
            <person name="Mottagui-Tabar S."/>
            <person name="Mulder N."/>
            <person name="Nakano N."/>
            <person name="Nakauchi H."/>
            <person name="Ng P."/>
            <person name="Nilsson R."/>
            <person name="Nishiguchi S."/>
            <person name="Nishikawa S."/>
            <person name="Nori F."/>
            <person name="Ohara O."/>
            <person name="Okazaki Y."/>
            <person name="Orlando V."/>
            <person name="Pang K.C."/>
            <person name="Pavan W.J."/>
            <person name="Pavesi G."/>
            <person name="Pesole G."/>
            <person name="Petrovsky N."/>
            <person name="Piazza S."/>
            <person name="Reed J."/>
            <person name="Reid J.F."/>
            <person name="Ring B.Z."/>
            <person name="Ringwald M."/>
            <person name="Rost B."/>
            <person name="Ruan Y."/>
            <person name="Salzberg S.L."/>
            <person name="Sandelin A."/>
            <person name="Schneider C."/>
            <person name="Schoenbach C."/>
            <person name="Sekiguchi K."/>
            <person name="Semple C.A."/>
            <person name="Seno S."/>
            <person name="Sessa L."/>
            <person name="Sheng Y."/>
            <person name="Shibata Y."/>
            <person name="Shimada H."/>
            <person name="Shimada K."/>
            <person name="Silva D."/>
            <person name="Sinclair B."/>
            <person name="Sperling S."/>
            <person name="Stupka E."/>
            <person name="Sugiura K."/>
            <person name="Sultana R."/>
            <person name="Takenaka Y."/>
            <person name="Taki K."/>
            <person name="Tammoja K."/>
            <person name="Tan S.L."/>
            <person name="Tang S."/>
            <person name="Taylor M.S."/>
            <person name="Tegner J."/>
            <person name="Teichmann S.A."/>
            <person name="Ueda H.R."/>
            <person name="van Nimwegen E."/>
            <person name="Verardo R."/>
            <person name="Wei C.L."/>
            <person name="Yagi K."/>
            <person name="Yamanishi H."/>
            <person name="Zabarovsky E."/>
            <person name="Zhu S."/>
            <person name="Zimmer A."/>
            <person name="Hide W."/>
            <person name="Bult C."/>
            <person name="Grimmond S.M."/>
            <person name="Teasdale R.D."/>
            <person name="Liu E.T."/>
            <person name="Brusic V."/>
            <person name="Quackenbush J."/>
            <person name="Wahlestedt C."/>
            <person name="Mattick J.S."/>
            <person name="Hume D.A."/>
            <person name="Kai C."/>
            <person name="Sasaki D."/>
            <person name="Tomaru Y."/>
            <person name="Fukuda S."/>
            <person name="Kanamori-Katayama M."/>
            <person name="Suzuki M."/>
            <person name="Aoki J."/>
            <person name="Arakawa T."/>
            <person name="Iida J."/>
            <person name="Imamura K."/>
            <person name="Itoh M."/>
            <person name="Kato T."/>
            <person name="Kawaji H."/>
            <person name="Kawagashira N."/>
            <person name="Kawashima T."/>
            <person name="Kojima M."/>
            <person name="Kondo S."/>
            <person name="Konno H."/>
            <person name="Nakano K."/>
            <person name="Ninomiya N."/>
            <person name="Nishio T."/>
            <person name="Okada M."/>
            <person name="Plessy C."/>
            <person name="Shibata K."/>
            <person name="Shiraki T."/>
            <person name="Suzuki S."/>
            <person name="Tagami M."/>
            <person name="Waki K."/>
            <person name="Watahiki A."/>
            <person name="Okamura-Oho Y."/>
            <person name="Suzuki H."/>
            <person name="Kawai J."/>
            <person name="Hayashizaki Y."/>
        </authorList>
    </citation>
    <scope>NUCLEOTIDE SEQUENCE [LARGE SCALE MRNA] (ISOFORMS 1 AND 2)</scope>
    <source>
        <strain>C57BL/6J</strain>
        <strain>NOD</strain>
        <tissue>Embryo</tissue>
        <tissue>Thymus</tissue>
    </source>
</reference>
<reference key="4">
    <citation type="submission" date="2005-09" db="EMBL/GenBank/DDBJ databases">
        <authorList>
            <person name="Mural R.J."/>
            <person name="Adams M.D."/>
            <person name="Myers E.W."/>
            <person name="Smith H.O."/>
            <person name="Venter J.C."/>
        </authorList>
    </citation>
    <scope>NUCLEOTIDE SEQUENCE [LARGE SCALE GENOMIC DNA]</scope>
</reference>
<reference key="5">
    <citation type="journal article" date="2004" name="Genome Res.">
        <title>The status, quality, and expansion of the NIH full-length cDNA project: the Mammalian Gene Collection (MGC).</title>
        <authorList>
            <consortium name="The MGC Project Team"/>
        </authorList>
    </citation>
    <scope>NUCLEOTIDE SEQUENCE [LARGE SCALE MRNA] (ISOFORM 1)</scope>
    <source>
        <strain>C57BL/6J</strain>
        <strain>C57BL/6NCr</strain>
        <tissue>Eye</tissue>
        <tissue>Head</tissue>
        <tissue>Hematopoietic stem cell</tissue>
    </source>
</reference>
<reference key="6">
    <citation type="journal article" date="2002" name="J. Biol. Chem.">
        <title>Analysis of double knockout mice lacking aquaporin-1 and urea transporter UT-B. Evidence for UT-B-facilitated water transport in erythrocytes.</title>
        <authorList>
            <person name="Yang B."/>
            <person name="Verkman A.S."/>
        </authorList>
    </citation>
    <scope>FUNCTION</scope>
    <scope>DISRUPTION PHENOTYPE</scope>
    <scope>SUBCELLULAR LOCATION</scope>
    <scope>TISSUE SPECIFICITY</scope>
</reference>
<reference key="7">
    <citation type="journal article" date="2010" name="Cell">
        <title>A tissue-specific atlas of mouse protein phosphorylation and expression.</title>
        <authorList>
            <person name="Huttlin E.L."/>
            <person name="Jedrychowski M.P."/>
            <person name="Elias J.E."/>
            <person name="Goswami T."/>
            <person name="Rad R."/>
            <person name="Beausoleil S.A."/>
            <person name="Villen J."/>
            <person name="Haas W."/>
            <person name="Sowa M.E."/>
            <person name="Gygi S.P."/>
        </authorList>
    </citation>
    <scope>PHOSPHORYLATION [LARGE SCALE ANALYSIS] AT SER-39 (ISOFORM 2)</scope>
    <scope>IDENTIFICATION BY MASS SPECTROMETRY [LARGE SCALE ANALYSIS]</scope>
    <source>
        <tissue>Spleen</tissue>
    </source>
</reference>
<gene>
    <name type="primary">Slc14a1</name>
</gene>
<organism>
    <name type="scientific">Mus musculus</name>
    <name type="common">Mouse</name>
    <dbReference type="NCBI Taxonomy" id="10090"/>
    <lineage>
        <taxon>Eukaryota</taxon>
        <taxon>Metazoa</taxon>
        <taxon>Chordata</taxon>
        <taxon>Craniata</taxon>
        <taxon>Vertebrata</taxon>
        <taxon>Euteleostomi</taxon>
        <taxon>Mammalia</taxon>
        <taxon>Eutheria</taxon>
        <taxon>Euarchontoglires</taxon>
        <taxon>Glires</taxon>
        <taxon>Rodentia</taxon>
        <taxon>Myomorpha</taxon>
        <taxon>Muroidea</taxon>
        <taxon>Muridae</taxon>
        <taxon>Murinae</taxon>
        <taxon>Mus</taxon>
        <taxon>Mus</taxon>
    </lineage>
</organism>
<feature type="chain" id="PRO_0000065738" description="Urea transporter 1">
    <location>
        <begin position="1"/>
        <end position="384"/>
    </location>
</feature>
<feature type="transmembrane region" description="Helical" evidence="3">
    <location>
        <begin position="61"/>
        <end position="81"/>
    </location>
</feature>
<feature type="transmembrane region" description="Helical" evidence="3">
    <location>
        <begin position="85"/>
        <end position="105"/>
    </location>
</feature>
<feature type="transmembrane region" description="Helical" evidence="3">
    <location>
        <begin position="111"/>
        <end position="131"/>
    </location>
</feature>
<feature type="transmembrane region" description="Helical" evidence="3">
    <location>
        <begin position="138"/>
        <end position="158"/>
    </location>
</feature>
<feature type="transmembrane region" description="Helical" evidence="3">
    <location>
        <begin position="168"/>
        <end position="188"/>
    </location>
</feature>
<feature type="transmembrane region" description="Helical" evidence="3">
    <location>
        <begin position="250"/>
        <end position="270"/>
    </location>
</feature>
<feature type="transmembrane region" description="Helical" evidence="3">
    <location>
        <begin position="276"/>
        <end position="296"/>
    </location>
</feature>
<feature type="transmembrane region" description="Helical" evidence="3">
    <location>
        <begin position="305"/>
        <end position="325"/>
    </location>
</feature>
<feature type="transmembrane region" description="Helical" evidence="3">
    <location>
        <begin position="327"/>
        <end position="347"/>
    </location>
</feature>
<feature type="site" description="Important for channel permeability" evidence="2">
    <location>
        <position position="334"/>
    </location>
</feature>
<feature type="glycosylation site" description="N-linked (GlcNAc...) asparagine" evidence="3">
    <location>
        <position position="206"/>
    </location>
</feature>
<feature type="splice variant" id="VSP_041574" description="In isoform 2." evidence="7">
    <original>M</original>
    <variation>MNGQSLTGGTDDAHHGPLWIDPFGNRGDKAAPEGFRRLSLALAQRWREQEPEEEIAM</variation>
    <location>
        <position position="1"/>
    </location>
</feature>
<feature type="sequence conflict" description="In Ref. 1; AAL47138." evidence="8" ref="1">
    <original>V</original>
    <variation>A</variation>
    <location>
        <position position="8"/>
    </location>
</feature>
<feature type="sequence conflict" description="In Ref. 5; AAI00571." evidence="8" ref="5">
    <original>V</original>
    <variation>A</variation>
    <location>
        <position position="50"/>
    </location>
</feature>
<feature type="modified residue" description="Phosphoserine" evidence="9">
    <location sequence="Q8VHL0-2">
        <position position="39"/>
    </location>
</feature>
<name>UT1_MOUSE</name>
<evidence type="ECO:0000250" key="1">
    <source>
        <dbReference type="UniProtKB" id="Q13336"/>
    </source>
</evidence>
<evidence type="ECO:0000250" key="2">
    <source>
        <dbReference type="UniProtKB" id="Q5QF96"/>
    </source>
</evidence>
<evidence type="ECO:0000255" key="3"/>
<evidence type="ECO:0000269" key="4">
    <source>
    </source>
</evidence>
<evidence type="ECO:0000269" key="5">
    <source>
    </source>
</evidence>
<evidence type="ECO:0000269" key="6">
    <source>
    </source>
</evidence>
<evidence type="ECO:0000303" key="7">
    <source>
    </source>
</evidence>
<evidence type="ECO:0000305" key="8"/>
<evidence type="ECO:0007744" key="9">
    <source>
    </source>
</evidence>
<keyword id="KW-0025">Alternative splicing</keyword>
<keyword id="KW-1003">Cell membrane</keyword>
<keyword id="KW-0325">Glycoprotein</keyword>
<keyword id="KW-0472">Membrane</keyword>
<keyword id="KW-0597">Phosphoprotein</keyword>
<keyword id="KW-1185">Reference proteome</keyword>
<keyword id="KW-0812">Transmembrane</keyword>
<keyword id="KW-1133">Transmembrane helix</keyword>
<keyword id="KW-0813">Transport</keyword>
<comment type="function">
    <text evidence="4 5">Mediates the transport of urea driven by a concentration gradient across the cell membranes of erythrocytes and the renal inner medullary collecting duct which is critical to the urinary concentrating mechanism (PubMed:11792714). Facilitates water transport in erythrocytes (PubMed:12133842).</text>
</comment>
<comment type="catalytic activity">
    <reaction evidence="4">
        <text>urea(in) = urea(out)</text>
        <dbReference type="Rhea" id="RHEA:32799"/>
        <dbReference type="ChEBI" id="CHEBI:16199"/>
    </reaction>
</comment>
<comment type="subunit">
    <text evidence="1 2">Homotrimer; each subunit contains a pore through which urea permeates (By similarity). Identified in a complex with STOM (By similarity).</text>
</comment>
<comment type="subcellular location">
    <subcellularLocation>
        <location evidence="5 6">Cell membrane</location>
        <topology evidence="3">Multi-pass membrane protein</topology>
    </subcellularLocation>
    <subcellularLocation>
        <location evidence="6">Basolateral cell membrane</location>
        <topology evidence="3">Multi-pass membrane protein</topology>
    </subcellularLocation>
    <text evidence="6">Restricted to the basolateral membrane in various portions of the urothelium.</text>
</comment>
<comment type="alternative products">
    <event type="alternative splicing"/>
    <isoform>
        <id>Q8VHL0-1</id>
        <name>1</name>
        <sequence type="displayed"/>
    </isoform>
    <isoform>
        <id>Q8VHL0-2</id>
        <name>2</name>
        <sequence type="described" ref="VSP_041574"/>
    </isoform>
</comment>
<comment type="tissue specificity">
    <text evidence="4 5 6">Expressed in brain, kidney, heart, liver, lung, skeletal muscle, spleen, testis, ureter and urinary bladder (at protein level). Along the gastrointestinal tract, detected in colon, jejunum and stomach (at protein level). In the kidney, expressed in some microvessels of the inner and outer medulla, but not all (at protein level). Not detected in the cortex (at protein level). Detected in the urothelium all along the urinary tract, including the papilla surface, the ureter, the bladder and the urethra (at protein level). In the brain, expressed at the border of the corpus callosum and striatum in astrocytic cellular processes surrounding blood microvessels (at protein level). Detected in erythrocytes (at protein level).</text>
</comment>
<comment type="induction">
    <text evidence="6">Down-regulated by water deprivation in urinary bladder and ureter, but not in kidney medulla, colon, testis nor brain.</text>
</comment>
<comment type="PTM">
    <text evidence="6">N-glycosylated in red blood cells, as well as in most non-erythroid tissues, except in the gastrocnemius muscle and in the gastrointestinal tract, including liver, colon and stomach.</text>
</comment>
<comment type="disruption phenotype">
    <text evidence="4 5">Mutant mice exhibit grossly normal appearance, activity and behavior. Plasma sodium, potassium, chloride, bicarbonate and creatinine concentrations, as well as hematocrit, are similar to wild type animals. Urea permeability in erythrocytes is 45-fold lower than that from wild-type mice. Daily urine output is 1.5-fold greater and urine osmolarity is lower than in wild-type mice. After 24 hours of water deprivation, plasma urea concentration is 30% higher and urine urea concentration 35% lower in mutant mice than in wild-type animals. Mice lacking both Aqp1 and Slc14a1 are born at the expected Mendelian ratio, but do not thrive; half of them die within ten days after birth and none are alive after two weeks. Urine osmolality is somewhat lower than that observed with mice lacking Aqp1. Besides, erythrocyte water permeability is significantly lower than in mice lacking only Aqp1.</text>
</comment>
<comment type="similarity">
    <text evidence="8">Belongs to the urea transporter family.</text>
</comment>
<proteinExistence type="evidence at protein level"/>
<accession>Q8VHL0</accession>
<accession>Q3U542</accession>
<accession>Q497G1</accession>
<accession>Q5RJG2</accession>
<accession>Q6PDP4</accession>
<accession>Q9CZX3</accession>
<dbReference type="EMBL" id="AF448798">
    <property type="protein sequence ID" value="AAL47138.1"/>
    <property type="molecule type" value="mRNA"/>
</dbReference>
<dbReference type="EMBL" id="AJ420967">
    <property type="protein sequence ID" value="CAD12807.1"/>
    <property type="molecule type" value="mRNA"/>
</dbReference>
<dbReference type="EMBL" id="AK012066">
    <property type="protein sequence ID" value="BAB28004.1"/>
    <property type="molecule type" value="mRNA"/>
</dbReference>
<dbReference type="EMBL" id="AK041979">
    <property type="protein sequence ID" value="BAC31119.1"/>
    <property type="molecule type" value="mRNA"/>
</dbReference>
<dbReference type="EMBL" id="AK153891">
    <property type="protein sequence ID" value="BAE32238.1"/>
    <property type="molecule type" value="mRNA"/>
</dbReference>
<dbReference type="EMBL" id="CH466528">
    <property type="protein sequence ID" value="EDL09437.1"/>
    <property type="molecule type" value="Genomic_DNA"/>
</dbReference>
<dbReference type="EMBL" id="CH466528">
    <property type="protein sequence ID" value="EDL09438.1"/>
    <property type="molecule type" value="Genomic_DNA"/>
</dbReference>
<dbReference type="EMBL" id="BC058594">
    <property type="protein sequence ID" value="AAH58594.2"/>
    <property type="molecule type" value="mRNA"/>
</dbReference>
<dbReference type="EMBL" id="BC086673">
    <property type="protein sequence ID" value="AAH86673.1"/>
    <property type="molecule type" value="mRNA"/>
</dbReference>
<dbReference type="EMBL" id="BC100570">
    <property type="protein sequence ID" value="AAI00571.2"/>
    <property type="molecule type" value="mRNA"/>
</dbReference>
<dbReference type="CCDS" id="CCDS29360.1">
    <molecule id="Q8VHL0-1"/>
</dbReference>
<dbReference type="CCDS" id="CCDS50330.1">
    <molecule id="Q8VHL0-2"/>
</dbReference>
<dbReference type="RefSeq" id="NP_001164481.1">
    <molecule id="Q8VHL0-2"/>
    <property type="nucleotide sequence ID" value="NM_001171010.1"/>
</dbReference>
<dbReference type="RefSeq" id="NP_001164482.1">
    <molecule id="Q8VHL0-1"/>
    <property type="nucleotide sequence ID" value="NM_001171011.1"/>
</dbReference>
<dbReference type="RefSeq" id="NP_082398.1">
    <molecule id="Q8VHL0-1"/>
    <property type="nucleotide sequence ID" value="NM_028122.4"/>
</dbReference>
<dbReference type="SMR" id="Q8VHL0"/>
<dbReference type="FunCoup" id="Q8VHL0">
    <property type="interactions" value="539"/>
</dbReference>
<dbReference type="STRING" id="10090.ENSMUSP00000125114"/>
<dbReference type="BindingDB" id="Q8VHL0"/>
<dbReference type="ChEMBL" id="CHEMBL2163171"/>
<dbReference type="GuidetoPHARMACOLOGY" id="982"/>
<dbReference type="GlyCosmos" id="Q8VHL0">
    <property type="glycosylation" value="1 site, No reported glycans"/>
</dbReference>
<dbReference type="GlyGen" id="Q8VHL0">
    <property type="glycosylation" value="1 site"/>
</dbReference>
<dbReference type="iPTMnet" id="Q8VHL0"/>
<dbReference type="PhosphoSitePlus" id="Q8VHL0"/>
<dbReference type="SwissPalm" id="Q8VHL0"/>
<dbReference type="PaxDb" id="10090-ENSMUSP00000125114"/>
<dbReference type="PeptideAtlas" id="Q8VHL0"/>
<dbReference type="ProteomicsDB" id="299662">
    <molecule id="Q8VHL0-1"/>
</dbReference>
<dbReference type="ProteomicsDB" id="299663">
    <molecule id="Q8VHL0-2"/>
</dbReference>
<dbReference type="Antibodypedia" id="22414">
    <property type="antibodies" value="162 antibodies from 26 providers"/>
</dbReference>
<dbReference type="DNASU" id="108052"/>
<dbReference type="Ensembl" id="ENSMUST00000091813.12">
    <molecule id="Q8VHL0-1"/>
    <property type="protein sequence ID" value="ENSMUSP00000089421.6"/>
    <property type="gene ID" value="ENSMUSG00000059336.15"/>
</dbReference>
<dbReference type="Ensembl" id="ENSMUST00000160292.8">
    <molecule id="Q8VHL0-2"/>
    <property type="protein sequence ID" value="ENSMUSP00000125114.2"/>
    <property type="gene ID" value="ENSMUSG00000059336.15"/>
</dbReference>
<dbReference type="Ensembl" id="ENSMUST00000160639.2">
    <molecule id="Q8VHL0-1"/>
    <property type="protein sequence ID" value="ENSMUSP00000125367.2"/>
    <property type="gene ID" value="ENSMUSG00000059336.15"/>
</dbReference>
<dbReference type="GeneID" id="108052"/>
<dbReference type="KEGG" id="mmu:108052"/>
<dbReference type="UCSC" id="uc008fsc.2">
    <molecule id="Q8VHL0-1"/>
    <property type="organism name" value="mouse"/>
</dbReference>
<dbReference type="UCSC" id="uc008fsd.2">
    <molecule id="Q8VHL0-2"/>
    <property type="organism name" value="mouse"/>
</dbReference>
<dbReference type="AGR" id="MGI:1351654"/>
<dbReference type="CTD" id="6563"/>
<dbReference type="MGI" id="MGI:1351654">
    <property type="gene designation" value="Slc14a1"/>
</dbReference>
<dbReference type="VEuPathDB" id="HostDB:ENSMUSG00000059336"/>
<dbReference type="eggNOG" id="ENOG502S2GD">
    <property type="taxonomic scope" value="Eukaryota"/>
</dbReference>
<dbReference type="GeneTree" id="ENSGT00390000018729"/>
<dbReference type="HOGENOM" id="CLU_047509_1_0_1"/>
<dbReference type="InParanoid" id="Q8VHL0"/>
<dbReference type="OrthoDB" id="38888at9989"/>
<dbReference type="TreeFam" id="TF332858"/>
<dbReference type="Reactome" id="R-MMU-425366">
    <property type="pathway name" value="Transport of bile salts and organic acids, metal ions and amine compounds"/>
</dbReference>
<dbReference type="BioGRID-ORCS" id="108052">
    <property type="hits" value="1 hit in 77 CRISPR screens"/>
</dbReference>
<dbReference type="ChiTaRS" id="Slc14a1">
    <property type="organism name" value="mouse"/>
</dbReference>
<dbReference type="PRO" id="PR:Q8VHL0"/>
<dbReference type="Proteomes" id="UP000000589">
    <property type="component" value="Chromosome 18"/>
</dbReference>
<dbReference type="RNAct" id="Q8VHL0">
    <property type="molecule type" value="protein"/>
</dbReference>
<dbReference type="Bgee" id="ENSMUSG00000059336">
    <property type="expression patterns" value="Expressed in bone marrow and 90 other cell types or tissues"/>
</dbReference>
<dbReference type="GO" id="GO:0016323">
    <property type="term" value="C:basolateral plasma membrane"/>
    <property type="evidence" value="ECO:0000314"/>
    <property type="project" value="UniProtKB"/>
</dbReference>
<dbReference type="GO" id="GO:0016020">
    <property type="term" value="C:membrane"/>
    <property type="evidence" value="ECO:0000304"/>
    <property type="project" value="MGI"/>
</dbReference>
<dbReference type="GO" id="GO:0005886">
    <property type="term" value="C:plasma membrane"/>
    <property type="evidence" value="ECO:0000314"/>
    <property type="project" value="UniProtKB"/>
</dbReference>
<dbReference type="GO" id="GO:0015265">
    <property type="term" value="F:urea channel activity"/>
    <property type="evidence" value="ECO:0000250"/>
    <property type="project" value="UniProtKB"/>
</dbReference>
<dbReference type="GO" id="GO:0015204">
    <property type="term" value="F:urea transmembrane transporter activity"/>
    <property type="evidence" value="ECO:0000315"/>
    <property type="project" value="MGI"/>
</dbReference>
<dbReference type="GO" id="GO:0005372">
    <property type="term" value="F:water transmembrane transporter activity"/>
    <property type="evidence" value="ECO:0000314"/>
    <property type="project" value="MGI"/>
</dbReference>
<dbReference type="GO" id="GO:0051649">
    <property type="term" value="P:establishment of localization in cell"/>
    <property type="evidence" value="ECO:0000316"/>
    <property type="project" value="MGI"/>
</dbReference>
<dbReference type="GO" id="GO:0071918">
    <property type="term" value="P:urea transmembrane transport"/>
    <property type="evidence" value="ECO:0000250"/>
    <property type="project" value="UniProtKB"/>
</dbReference>
<dbReference type="GO" id="GO:0015840">
    <property type="term" value="P:urea transport"/>
    <property type="evidence" value="ECO:0000315"/>
    <property type="project" value="MGI"/>
</dbReference>
<dbReference type="GO" id="GO:0006833">
    <property type="term" value="P:water transport"/>
    <property type="evidence" value="ECO:0000314"/>
    <property type="project" value="MGI"/>
</dbReference>
<dbReference type="FunFam" id="1.10.3430.10:FF:000002">
    <property type="entry name" value="urea transporter 2"/>
    <property type="match status" value="1"/>
</dbReference>
<dbReference type="Gene3D" id="1.10.3430.10">
    <property type="entry name" value="Ammonium transporter AmtB like domains"/>
    <property type="match status" value="1"/>
</dbReference>
<dbReference type="InterPro" id="IPR029020">
    <property type="entry name" value="Ammonium/urea_transptr"/>
</dbReference>
<dbReference type="InterPro" id="IPR004937">
    <property type="entry name" value="Urea_transporter"/>
</dbReference>
<dbReference type="PANTHER" id="PTHR10464">
    <property type="entry name" value="UREA TRANSPORTER"/>
    <property type="match status" value="1"/>
</dbReference>
<dbReference type="PANTHER" id="PTHR10464:SF5">
    <property type="entry name" value="UREA TRANSPORTER 1"/>
    <property type="match status" value="1"/>
</dbReference>
<dbReference type="Pfam" id="PF03253">
    <property type="entry name" value="UT"/>
    <property type="match status" value="1"/>
</dbReference>
<dbReference type="PIRSF" id="PIRSF016502">
    <property type="entry name" value="Urea_transporter"/>
    <property type="match status" value="1"/>
</dbReference>
<protein>
    <recommendedName>
        <fullName>Urea transporter 1</fullName>
    </recommendedName>
    <alternativeName>
        <fullName>Solute carrier family 14 member 1</fullName>
    </alternativeName>
    <alternativeName>
        <fullName>Urea transporter B</fullName>
        <shortName>UT-B</shortName>
    </alternativeName>
    <alternativeName>
        <fullName>Urea transporter, erythrocyte</fullName>
    </alternativeName>
</protein>